<reference evidence="8" key="1">
    <citation type="journal article" date="1998" name="Science">
        <title>Genome sequence of the nematode C. elegans: a platform for investigating biology.</title>
        <authorList>
            <consortium name="The C. elegans sequencing consortium"/>
        </authorList>
    </citation>
    <scope>NUCLEOTIDE SEQUENCE [LARGE SCALE GENOMIC DNA]</scope>
    <source>
        <strain evidence="8">Bristol N2</strain>
    </source>
</reference>
<reference evidence="6" key="2">
    <citation type="journal article" date="2001" name="J. Cell Sci.">
        <title>The ZW10 and Rough Deal checkpoint proteins function together in a large, evolutionarily conserved complex targeted to the kinetochore.</title>
        <authorList>
            <person name="Scaeerou F."/>
            <person name="Starr D.A."/>
            <person name="Piano F."/>
            <person name="Papoulas O."/>
            <person name="Karess R.E."/>
            <person name="Goldberg M.L."/>
        </authorList>
    </citation>
    <scope>FUNCTION</scope>
    <scope>DISRUPTION PHENOTYPE</scope>
</reference>
<reference evidence="6" key="3">
    <citation type="journal article" date="2008" name="Genes Dev.">
        <title>A new mechanism controlling kinetochore-microtubule interactions revealed by comparison of two dynein-targeting components: SPDL-1 and the Rod/Zwilch/Zw10 complex.</title>
        <authorList>
            <person name="Gassmann R."/>
            <person name="Essex A."/>
            <person name="Hu J.-S."/>
            <person name="Maddox P.S."/>
            <person name="Motegi F."/>
            <person name="Sugimoto A."/>
            <person name="O'Rourke S.M."/>
            <person name="Bowerman B."/>
            <person name="McLeod I."/>
            <person name="Yates J.R. III"/>
            <person name="Oegema K."/>
            <person name="Cheeseman I.M."/>
            <person name="Desai A."/>
        </authorList>
    </citation>
    <scope>FUNCTION</scope>
    <scope>IDENTIFICATION IN RZZ COMPLEX</scope>
    <scope>SUBCELLULAR LOCATION</scope>
    <scope>DISRUPTION PHENOTYPE</scope>
</reference>
<reference evidence="6" key="4">
    <citation type="journal article" date="2009" name="Mol. Biol. Cell">
        <title>Systematic analysis in Caenorhabditis elegans reveals that the spindle checkpoint is composed of two largely independent branches.</title>
        <authorList>
            <person name="Essex A."/>
            <person name="Dammermann A."/>
            <person name="Lewellyn L."/>
            <person name="Oegema K."/>
            <person name="Desai A."/>
        </authorList>
    </citation>
    <scope>FUNCTION</scope>
    <scope>DISRUPTION PHENOTYPE</scope>
</reference>
<reference evidence="6" key="5">
    <citation type="journal article" date="2013" name="Science">
        <title>Crosstalk between microtubule attachment complexes ensures accurate chromosome segregation.</title>
        <authorList>
            <person name="Cheerambathur D.K."/>
            <person name="Gassmann R."/>
            <person name="Cook B."/>
            <person name="Oegema K."/>
            <person name="Desai A."/>
        </authorList>
    </citation>
    <scope>FUNCTION</scope>
    <scope>INTERACTION WITH NDC-80</scope>
</reference>
<dbReference type="EMBL" id="BX284604">
    <property type="protein sequence ID" value="CCD69392.1"/>
    <property type="molecule type" value="Genomic_DNA"/>
</dbReference>
<dbReference type="PIR" id="T29227">
    <property type="entry name" value="T29227"/>
</dbReference>
<dbReference type="RefSeq" id="NP_501200.1">
    <property type="nucleotide sequence ID" value="NM_068799.8"/>
</dbReference>
<dbReference type="SMR" id="Q20849"/>
<dbReference type="ComplexPortal" id="CPX-810">
    <property type="entry name" value="RZZ complex"/>
</dbReference>
<dbReference type="FunCoup" id="Q20849">
    <property type="interactions" value="45"/>
</dbReference>
<dbReference type="STRING" id="6239.F55G1.4.2"/>
<dbReference type="PaxDb" id="6239-F55G1.4"/>
<dbReference type="PeptideAtlas" id="Q20849"/>
<dbReference type="EnsemblMetazoa" id="F55G1.4.1">
    <property type="protein sequence ID" value="F55G1.4.1"/>
    <property type="gene ID" value="WBGene00018900"/>
</dbReference>
<dbReference type="GeneID" id="177520"/>
<dbReference type="KEGG" id="cel:CELE_F55G1.4"/>
<dbReference type="UCSC" id="F55G1.4">
    <property type="organism name" value="c. elegans"/>
</dbReference>
<dbReference type="AGR" id="WB:WBGene00018900"/>
<dbReference type="CTD" id="177520"/>
<dbReference type="WormBase" id="F55G1.4">
    <property type="protein sequence ID" value="CE07281"/>
    <property type="gene ID" value="WBGene00018900"/>
    <property type="gene designation" value="rod-1"/>
</dbReference>
<dbReference type="eggNOG" id="KOG4256">
    <property type="taxonomic scope" value="Eukaryota"/>
</dbReference>
<dbReference type="GeneTree" id="ENSGT00390000007883"/>
<dbReference type="HOGENOM" id="CLU_232474_0_0_1"/>
<dbReference type="InParanoid" id="Q20849"/>
<dbReference type="OMA" id="EYAKFAM"/>
<dbReference type="OrthoDB" id="5868545at2759"/>
<dbReference type="PRO" id="PR:Q20849"/>
<dbReference type="Proteomes" id="UP000001940">
    <property type="component" value="Chromosome IV"/>
</dbReference>
<dbReference type="Bgee" id="WBGene00018900">
    <property type="expression patterns" value="Expressed in germ line (C elegans) and 4 other cell types or tissues"/>
</dbReference>
<dbReference type="GO" id="GO:0005737">
    <property type="term" value="C:cytoplasm"/>
    <property type="evidence" value="ECO:0000318"/>
    <property type="project" value="GO_Central"/>
</dbReference>
<dbReference type="GO" id="GO:0000776">
    <property type="term" value="C:kinetochore"/>
    <property type="evidence" value="ECO:0000314"/>
    <property type="project" value="ComplexPortal"/>
</dbReference>
<dbReference type="GO" id="GO:0005828">
    <property type="term" value="C:kinetochore microtubule"/>
    <property type="evidence" value="ECO:0000318"/>
    <property type="project" value="GO_Central"/>
</dbReference>
<dbReference type="GO" id="GO:1990423">
    <property type="term" value="C:RZZ complex"/>
    <property type="evidence" value="ECO:0000314"/>
    <property type="project" value="UniProtKB"/>
</dbReference>
<dbReference type="GO" id="GO:0019904">
    <property type="term" value="F:protein domain specific binding"/>
    <property type="evidence" value="ECO:0000353"/>
    <property type="project" value="WormBase"/>
</dbReference>
<dbReference type="GO" id="GO:0031267">
    <property type="term" value="F:small GTPase binding"/>
    <property type="evidence" value="ECO:0000318"/>
    <property type="project" value="GO_Central"/>
</dbReference>
<dbReference type="GO" id="GO:0090268">
    <property type="term" value="P:activation of mitotic cell cycle spindle assembly checkpoint"/>
    <property type="evidence" value="ECO:0000316"/>
    <property type="project" value="UniProtKB"/>
</dbReference>
<dbReference type="GO" id="GO:0051301">
    <property type="term" value="P:cell division"/>
    <property type="evidence" value="ECO:0007669"/>
    <property type="project" value="UniProtKB-KW"/>
</dbReference>
<dbReference type="GO" id="GO:0007079">
    <property type="term" value="P:mitotic chromosome movement towards spindle pole"/>
    <property type="evidence" value="ECO:0000316"/>
    <property type="project" value="UniProtKB"/>
</dbReference>
<dbReference type="GO" id="GO:0000070">
    <property type="term" value="P:mitotic sister chromatid segregation"/>
    <property type="evidence" value="ECO:0000318"/>
    <property type="project" value="GO_Central"/>
</dbReference>
<dbReference type="GO" id="GO:0007094">
    <property type="term" value="P:mitotic spindle assembly checkpoint signaling"/>
    <property type="evidence" value="ECO:0000318"/>
    <property type="project" value="GO_Central"/>
</dbReference>
<dbReference type="GO" id="GO:1905561">
    <property type="term" value="P:positive regulation of kinetochore assembly"/>
    <property type="evidence" value="ECO:0000316"/>
    <property type="project" value="UniProtKB"/>
</dbReference>
<dbReference type="GO" id="GO:1901970">
    <property type="term" value="P:positive regulation of mitotic sister chromatid separation"/>
    <property type="evidence" value="ECO:0000316"/>
    <property type="project" value="UniProtKB"/>
</dbReference>
<dbReference type="GO" id="GO:0010696">
    <property type="term" value="P:positive regulation of mitotic spindle pole body separation"/>
    <property type="evidence" value="ECO:0000315"/>
    <property type="project" value="UniProtKB"/>
</dbReference>
<dbReference type="GO" id="GO:1905342">
    <property type="term" value="P:positive regulation of protein localization to kinetochore"/>
    <property type="evidence" value="ECO:0000315"/>
    <property type="project" value="UniProtKB"/>
</dbReference>
<dbReference type="GO" id="GO:0034501">
    <property type="term" value="P:protein localization to kinetochore"/>
    <property type="evidence" value="ECO:0000314"/>
    <property type="project" value="ComplexPortal"/>
</dbReference>
<dbReference type="GO" id="GO:1903394">
    <property type="term" value="P:protein localization to kinetochore involved in kinetochore assembly"/>
    <property type="evidence" value="ECO:0000315"/>
    <property type="project" value="UniProtKB"/>
</dbReference>
<dbReference type="GO" id="GO:1902423">
    <property type="term" value="P:regulation of attachment of mitotic spindle microtubules to kinetochore"/>
    <property type="evidence" value="ECO:0000315"/>
    <property type="project" value="WormBase"/>
</dbReference>
<dbReference type="GO" id="GO:0051988">
    <property type="term" value="P:regulation of attachment of spindle microtubules to kinetochore"/>
    <property type="evidence" value="ECO:0000303"/>
    <property type="project" value="ComplexPortal"/>
</dbReference>
<dbReference type="InterPro" id="IPR055403">
    <property type="entry name" value="ARM_KNTC1_1st"/>
</dbReference>
<dbReference type="InterPro" id="IPR052802">
    <property type="entry name" value="KNTC1"/>
</dbReference>
<dbReference type="PANTHER" id="PTHR15688">
    <property type="entry name" value="KINETOCHORE-ASSOCIATED PROTEIN 1"/>
    <property type="match status" value="1"/>
</dbReference>
<dbReference type="PANTHER" id="PTHR15688:SF1">
    <property type="entry name" value="KINETOCHORE-ASSOCIATED PROTEIN 1"/>
    <property type="match status" value="1"/>
</dbReference>
<dbReference type="Pfam" id="PF24520">
    <property type="entry name" value="ARM_KNTC1_1st"/>
    <property type="match status" value="1"/>
</dbReference>
<comment type="function">
    <text evidence="2 3 4 5">Essential component of the mitotic checkpoint, which prevents cells from prematurely exiting mitosis (PubMed:11590237, PubMed:18765790). Required for chromosome segregation, the assembly of the dynein-dynactin and mdf-1-mdf-2 complexes onto kinetochores and spindle pole separation (PubMed:18765790, PubMed:19109417). Plays a role in nuclear envelope breakdown (PubMed:19109417). Its function related to the spindle assembly machinery and kinetochore-microtubule attachments likely depends on its association in the mitotic RZZ complex (PubMed:18765790, PubMed:24231804). The RZZ complex recruits the spindly-like protein spdl-1 to kinetochores (PubMed:18765790, PubMed:24231804). To prevent irregular chromosome segregation, the complex also inhibits the attachment of the kinetochore-associated NDC80 complex to microtubules (PubMed:24231804). The recruitment of spdl-1 to kinetochores relieves this inhibition (PubMed:24231804). Required for embryonic development (PubMed:11590237, PubMed:18765790, PubMed:19109417).</text>
</comment>
<comment type="subunit">
    <text evidence="3 5">Component of the RZZ complex composed of rod-1, czw-1 and zwl-1 (PubMed:18765790). Interacts (via N-terminus) with NDC80 complex component ndc-80 (PubMed:24231804).</text>
</comment>
<comment type="subcellular location">
    <subcellularLocation>
        <location evidence="7">Chromosome</location>
        <location evidence="7">Centromere</location>
        <location evidence="7">Kinetochore</location>
    </subcellularLocation>
    <subcellularLocation>
        <location evidence="1">Cytoplasm</location>
        <location evidence="1">Cytoskeleton</location>
        <location evidence="1">Spindle</location>
    </subcellularLocation>
    <text evidence="7">Localizes to the kinetochore during nuclear envelope breakdown and remains there until the metaphase-anaphase transition. Localization of the RZZ complex to kinetochores is dependent upon knl-1.</text>
</comment>
<comment type="disruption phenotype">
    <text evidence="2 3 4">RNAi-mediated knockdown results in embryonic lethality (PubMed:11590237, PubMed:18765790, PubMed:19109417). RNAi-mediated knockdown results in defects in mitosis which include the formation of chromatin bridges in between sister chromatids during anaphase (PubMed:11590237). There is also defective chromosome segregation, premature spindle pole separation and incorrectly attached kinetochores (PubMed:18765790). In addition, localization of the spindly-like protein spdl-1 and the other Rzz complex components czw-1 and zwl-1 to the kinetochore is abolished (PubMed:18765790).</text>
</comment>
<protein>
    <recommendedName>
        <fullName evidence="6">Kinetochore-associated protein rod-1</fullName>
    </recommendedName>
    <alternativeName>
        <fullName evidence="9">Rough deal homolog</fullName>
    </alternativeName>
</protein>
<organism evidence="8">
    <name type="scientific">Caenorhabditis elegans</name>
    <dbReference type="NCBI Taxonomy" id="6239"/>
    <lineage>
        <taxon>Eukaryota</taxon>
        <taxon>Metazoa</taxon>
        <taxon>Ecdysozoa</taxon>
        <taxon>Nematoda</taxon>
        <taxon>Chromadorea</taxon>
        <taxon>Rhabditida</taxon>
        <taxon>Rhabditina</taxon>
        <taxon>Rhabditomorpha</taxon>
        <taxon>Rhabditoidea</taxon>
        <taxon>Rhabditidae</taxon>
        <taxon>Peloderinae</taxon>
        <taxon>Caenorhabditis</taxon>
    </lineage>
</organism>
<name>KNTC1_CAEEL</name>
<evidence type="ECO:0000250" key="1">
    <source>
        <dbReference type="UniProtKB" id="P50748"/>
    </source>
</evidence>
<evidence type="ECO:0000269" key="2">
    <source>
    </source>
</evidence>
<evidence type="ECO:0000269" key="3">
    <source>
    </source>
</evidence>
<evidence type="ECO:0000269" key="4">
    <source>
    </source>
</evidence>
<evidence type="ECO:0000269" key="5">
    <source>
    </source>
</evidence>
<evidence type="ECO:0000305" key="6"/>
<evidence type="ECO:0000305" key="7">
    <source>
    </source>
</evidence>
<evidence type="ECO:0000312" key="8">
    <source>
        <dbReference type="Proteomes" id="UP000001940"/>
    </source>
</evidence>
<evidence type="ECO:0000312" key="9">
    <source>
        <dbReference type="WormBase" id="F55G1.4"/>
    </source>
</evidence>
<feature type="chain" id="PRO_0000438726" description="Kinetochore-associated protein rod-1" evidence="6">
    <location>
        <begin position="1"/>
        <end position="2049"/>
    </location>
</feature>
<accession>Q20849</accession>
<proteinExistence type="evidence at protein level"/>
<gene>
    <name evidence="9" type="primary">rod-1</name>
    <name evidence="9" type="ORF">F55G1.4</name>
</gene>
<sequence>MGRLGEAKAVDLEAETSTVGLYDVCTVGRILPLLNEMSIDKKSPAWKLKPKSNERFLVLASCSDLAVFSLGEKSDYSFNTGLGGAITDFEILGSSSFFVGVIEHRRIVILSLDKQEIYLNEPAPHEIDFVVCHTTSSVCQLIFGSRSDNWHTITLPGDVAASKETNRFENWHRDQIQEFFHQAMGKTVSKSVDMSKVAGDITLISNGPLQTFASIDQQRGIHWCGLVESEFEVIGMEKQFLQVRDGGRFSLHLDTDGWIHVFDSLVSSFCHEFDMKMSPDDKILDFVIIDKNEVEVPKMFAILVLPRDGDSTKMMIYDRLNKDNCFALDSSTSTTLFAYGGSDRVLIAVEELENSLADEQDGSQIVVRQVSQSRPEMRFESLLKNNRFEEAEKFAMAFMLDVQKVYKGHVHYLMDSCDESDESFETLMTKMGQIQDHNMVAETYFTLVGMSRRCDRIRTYLTHAKKRRITDLDILKMIEALCYTWGTYRIIAGPEENEPSRPQVNETIWDLFVEALHDANPWIEIYNEFISDAQFTQARVIFSRHGKSITDYMCDDEENTISRLETLFRMFIDAISSDISKWSNVIEHVTTDILPACVMITEELIPCLESLITSLISLLEYRDSTNWPENAIKAASSYDTMTKILSNNGNTPATQCILVMYGSKLGSSAGNKPSSMSRIKKIYYDLIELKRLKDVYECSISFSVFQNMSSEQICHKILQNALANPNMTHAKIEKFVKPFMAERHLDQEQTIVNYIQMMSGAAVTNANLFGWEKQCVQLCASLMDETRRCCSIISIASTAKIPWPAELNEAVEKILASRTLLRSEIEQMHLVCKRTELYKMLSSYGFSRQDIELLTTPDSNMDIILTIRCMLAHREKASRFVDVIKLVDLLKAMQGSSQPRTLRIEYVQSFAIIHMMSHQDVTISIINYIDSLGDRERVKTISLVFSFIECVANAPATGDNVLEREKILGVGEELMSHYTCRDNNFNDPERRLKDELVLLREVQKTETKAVLLSELKDEDWQRRFLERLIESNSSMSLNLGRCSYMGISPEHLIEMILTKATVENDMDTIVDSITNYVEFINSLTDSSREMLEPIVQILSWITFRLPKLLPNETEMARADYIAFVVKRIGRVVRETLRRFSFDVISDDLDYLLQLEAFYHLGEHIIKQSLRGQENENEKQEMFRSDDDTFLPTDSSNPFSNQSSLRIFEFKRPLGTFDFSNDPALFEGVQGVLALAMVAPSVARPYDSEISPDDANEFRSSWEQLNMFLAMHSQDLLDISARVFAGSLKCWAGEYLQGIVEMEQPILSVVERMLQQKKFDFWHAVTLLGGIPLERLDRAIIDLQKRQGVRSSTKATIQYLQLAFVMSLLARNMEKVPTIVSAYEQKYLVKKLAEEGIRVSITQDFVDKVLQQAIDLRQPLSPLRLHDYVKKYVEKLIRNSKISVGEYMVRYATLLIRKASVAGRHTDREIRKEEIEKYIEAARIALRIAEEEDASCICNYLHCLLYVVCPYNYEVIQFIVTSYGKYATETVEIEFNKNLKSIMAFLWAYQRTNHISNEESIWFTKRESVLMKDEKEFEKTGRMLDPFGHSLRVVYEDDGSNMSDSYNSDLALSSDAMVYERNSVIISDLPSLAEQYLPFHAFLLRKKEEIDEIVMGIVKAELSIFNVPIWQTFLREVSWLSSRFSRSQLLSSAIFAHANKYAKFGKSLPDGERNVIYELLNSASQRHVVVSTIALLFKRIILSDVKIELLQMGVNISERWTSDLTGEEQQEMEEQSARLKDGIAKFSTELELKKNGLYNEKTADNIENVSELCSLIYNEMVQWDDSRDVLKKCQVVDKIAKANGLDLTALHEQLVFSWVEDTQTIISINHVDMNESIGGTSFLDHKDETDDQNDLRIPLFDGILDKVVVLCQRIDKKRLLTRLGSILMRGGRKATGGYTAVVRATCIILRSFTDTEVSELLSGADMFALCSTLENQLYERLFEKAEVKGDCKTDKMQLIKSLLQCPSRTHPMTALIACLIIDHEFKDPKRDISLGWDVGCVPVSANSSNS</sequence>
<keyword id="KW-0131">Cell cycle</keyword>
<keyword id="KW-0132">Cell division</keyword>
<keyword id="KW-0137">Centromere</keyword>
<keyword id="KW-0158">Chromosome</keyword>
<keyword id="KW-0159">Chromosome partition</keyword>
<keyword id="KW-0963">Cytoplasm</keyword>
<keyword id="KW-0206">Cytoskeleton</keyword>
<keyword id="KW-0995">Kinetochore</keyword>
<keyword id="KW-0498">Mitosis</keyword>
<keyword id="KW-1185">Reference proteome</keyword>